<reference key="1">
    <citation type="journal article" date="2001" name="Microb. Drug Resist.">
        <title>Annotated draft genomic sequence from a Streptococcus pneumoniae type 19F clinical isolate.</title>
        <authorList>
            <person name="Dopazo J."/>
            <person name="Mendoza A."/>
            <person name="Herrero J."/>
            <person name="Caldara F."/>
            <person name="Humbert Y."/>
            <person name="Friedli L."/>
            <person name="Guerrier M."/>
            <person name="Grand-Schenk E."/>
            <person name="Gandin C."/>
            <person name="de Francesco M."/>
            <person name="Polissi A."/>
            <person name="Buell G."/>
            <person name="Feger G."/>
            <person name="Garcia E."/>
            <person name="Peitsch M."/>
            <person name="Garcia-Bustos J.F."/>
        </authorList>
    </citation>
    <scope>NUCLEOTIDE SEQUENCE [LARGE SCALE GENOMIC DNA]</scope>
    <source>
        <strain>G54</strain>
    </source>
</reference>
<reference key="2">
    <citation type="submission" date="2008-03" db="EMBL/GenBank/DDBJ databases">
        <title>Pneumococcal beta glucoside metabolism investigated by whole genome comparison.</title>
        <authorList>
            <person name="Mulas L."/>
            <person name="Trappetti C."/>
            <person name="Hakenbeck R."/>
            <person name="Iannelli F."/>
            <person name="Pozzi G."/>
            <person name="Davidsen T.M."/>
            <person name="Tettelin H."/>
            <person name="Oggioni M."/>
        </authorList>
    </citation>
    <scope>NUCLEOTIDE SEQUENCE [LARGE SCALE GENOMIC DNA]</scope>
    <source>
        <strain>G54</strain>
    </source>
</reference>
<comment type="catalytic activity">
    <reaction evidence="1">
        <text>(2R)-3-phosphoglycerate + ATP = (2R)-3-phospho-glyceroyl phosphate + ADP</text>
        <dbReference type="Rhea" id="RHEA:14801"/>
        <dbReference type="ChEBI" id="CHEBI:30616"/>
        <dbReference type="ChEBI" id="CHEBI:57604"/>
        <dbReference type="ChEBI" id="CHEBI:58272"/>
        <dbReference type="ChEBI" id="CHEBI:456216"/>
        <dbReference type="EC" id="2.7.2.3"/>
    </reaction>
</comment>
<comment type="pathway">
    <text evidence="1">Carbohydrate degradation; glycolysis; pyruvate from D-glyceraldehyde 3-phosphate: step 2/5.</text>
</comment>
<comment type="subunit">
    <text evidence="1">Monomer.</text>
</comment>
<comment type="subcellular location">
    <subcellularLocation>
        <location evidence="1">Cytoplasm</location>
    </subcellularLocation>
</comment>
<comment type="similarity">
    <text evidence="1">Belongs to the phosphoglycerate kinase family.</text>
</comment>
<gene>
    <name evidence="1" type="primary">pgk</name>
    <name type="ordered locus">SPG_0452</name>
</gene>
<evidence type="ECO:0000255" key="1">
    <source>
        <dbReference type="HAMAP-Rule" id="MF_00145"/>
    </source>
</evidence>
<dbReference type="EC" id="2.7.2.3" evidence="1"/>
<dbReference type="EMBL" id="CP001015">
    <property type="protein sequence ID" value="ACF55930.1"/>
    <property type="molecule type" value="Genomic_DNA"/>
</dbReference>
<dbReference type="KEGG" id="spx:SPG_0452"/>
<dbReference type="HOGENOM" id="CLU_025427_0_1_9"/>
<dbReference type="UniPathway" id="UPA00109">
    <property type="reaction ID" value="UER00185"/>
</dbReference>
<dbReference type="GO" id="GO:0005829">
    <property type="term" value="C:cytosol"/>
    <property type="evidence" value="ECO:0007669"/>
    <property type="project" value="TreeGrafter"/>
</dbReference>
<dbReference type="GO" id="GO:0043531">
    <property type="term" value="F:ADP binding"/>
    <property type="evidence" value="ECO:0007669"/>
    <property type="project" value="TreeGrafter"/>
</dbReference>
<dbReference type="GO" id="GO:0005524">
    <property type="term" value="F:ATP binding"/>
    <property type="evidence" value="ECO:0007669"/>
    <property type="project" value="UniProtKB-KW"/>
</dbReference>
<dbReference type="GO" id="GO:0004618">
    <property type="term" value="F:phosphoglycerate kinase activity"/>
    <property type="evidence" value="ECO:0007669"/>
    <property type="project" value="UniProtKB-UniRule"/>
</dbReference>
<dbReference type="GO" id="GO:0006094">
    <property type="term" value="P:gluconeogenesis"/>
    <property type="evidence" value="ECO:0007669"/>
    <property type="project" value="TreeGrafter"/>
</dbReference>
<dbReference type="GO" id="GO:0006096">
    <property type="term" value="P:glycolytic process"/>
    <property type="evidence" value="ECO:0007669"/>
    <property type="project" value="UniProtKB-UniRule"/>
</dbReference>
<dbReference type="FunFam" id="3.40.50.1260:FF:000001">
    <property type="entry name" value="Phosphoglycerate kinase"/>
    <property type="match status" value="1"/>
</dbReference>
<dbReference type="FunFam" id="3.40.50.1260:FF:000008">
    <property type="entry name" value="Phosphoglycerate kinase"/>
    <property type="match status" value="1"/>
</dbReference>
<dbReference type="Gene3D" id="3.40.50.1260">
    <property type="entry name" value="Phosphoglycerate kinase, N-terminal domain"/>
    <property type="match status" value="2"/>
</dbReference>
<dbReference type="HAMAP" id="MF_00145">
    <property type="entry name" value="Phosphoglyc_kinase"/>
    <property type="match status" value="1"/>
</dbReference>
<dbReference type="InterPro" id="IPR001576">
    <property type="entry name" value="Phosphoglycerate_kinase"/>
</dbReference>
<dbReference type="InterPro" id="IPR015911">
    <property type="entry name" value="Phosphoglycerate_kinase_CS"/>
</dbReference>
<dbReference type="InterPro" id="IPR015824">
    <property type="entry name" value="Phosphoglycerate_kinase_N"/>
</dbReference>
<dbReference type="InterPro" id="IPR036043">
    <property type="entry name" value="Phosphoglycerate_kinase_sf"/>
</dbReference>
<dbReference type="PANTHER" id="PTHR11406">
    <property type="entry name" value="PHOSPHOGLYCERATE KINASE"/>
    <property type="match status" value="1"/>
</dbReference>
<dbReference type="PANTHER" id="PTHR11406:SF23">
    <property type="entry name" value="PHOSPHOGLYCERATE KINASE 1, CHLOROPLASTIC-RELATED"/>
    <property type="match status" value="1"/>
</dbReference>
<dbReference type="Pfam" id="PF00162">
    <property type="entry name" value="PGK"/>
    <property type="match status" value="1"/>
</dbReference>
<dbReference type="PIRSF" id="PIRSF000724">
    <property type="entry name" value="Pgk"/>
    <property type="match status" value="1"/>
</dbReference>
<dbReference type="PRINTS" id="PR00477">
    <property type="entry name" value="PHGLYCKINASE"/>
</dbReference>
<dbReference type="SUPFAM" id="SSF53748">
    <property type="entry name" value="Phosphoglycerate kinase"/>
    <property type="match status" value="1"/>
</dbReference>
<dbReference type="PROSITE" id="PS00111">
    <property type="entry name" value="PGLYCERATE_KINASE"/>
    <property type="match status" value="1"/>
</dbReference>
<keyword id="KW-0067">ATP-binding</keyword>
<keyword id="KW-0963">Cytoplasm</keyword>
<keyword id="KW-0324">Glycolysis</keyword>
<keyword id="KW-0418">Kinase</keyword>
<keyword id="KW-0547">Nucleotide-binding</keyword>
<keyword id="KW-0808">Transferase</keyword>
<protein>
    <recommendedName>
        <fullName evidence="1">Phosphoglycerate kinase</fullName>
        <ecNumber evidence="1">2.7.2.3</ecNumber>
    </recommendedName>
</protein>
<accession>B5E1U9</accession>
<sequence length="398" mass="41934">MAKLTVKDVDLKGKKVLVRVDFNVPLKDGVITNDNRITAALPTIKYIIEQGGRAILFSHLGRVKEEADKAGKSLAPVAADLAAKLGQDVVFPGVTRGAELEAAINVLEDGQVLLVENTRYEDVDGXKESKNDPELGKYWASLGDGIFVNDAFGTAHRAHASNVGISANVEKAVAGFLLENEIAYIQEAVETPERPFVAILGGSKVSDKIGVIENLLEKADKVLIGGGMTYTFYKAQGIEIGNSLVEEDKLDVAKALLEKANGKLILPVDSKEANAFAGYTEVRDTEGEAVSEGFLGLDIGPKSIAKFDEALTGAKTVVWNGPMGVFENPDFQAGTIGVMDAIVKQPGVKSIIGGGDSAAAAINLGRADKFSWISTGGGASMELLEGKVLPGLAALTEK</sequence>
<feature type="chain" id="PRO_1000096382" description="Phosphoglycerate kinase">
    <location>
        <begin position="1"/>
        <end position="398"/>
    </location>
</feature>
<feature type="binding site" evidence="1">
    <location>
        <begin position="21"/>
        <end position="23"/>
    </location>
    <ligand>
        <name>substrate</name>
    </ligand>
</feature>
<feature type="binding site" evidence="1">
    <location>
        <position position="36"/>
    </location>
    <ligand>
        <name>substrate</name>
    </ligand>
</feature>
<feature type="binding site" evidence="1">
    <location>
        <begin position="59"/>
        <end position="62"/>
    </location>
    <ligand>
        <name>substrate</name>
    </ligand>
</feature>
<feature type="binding site" evidence="1">
    <location>
        <position position="119"/>
    </location>
    <ligand>
        <name>substrate</name>
    </ligand>
</feature>
<feature type="binding site" evidence="1">
    <location>
        <position position="157"/>
    </location>
    <ligand>
        <name>substrate</name>
    </ligand>
</feature>
<feature type="binding site" evidence="1">
    <location>
        <position position="208"/>
    </location>
    <ligand>
        <name>ATP</name>
        <dbReference type="ChEBI" id="CHEBI:30616"/>
    </ligand>
</feature>
<feature type="binding site" evidence="1">
    <location>
        <position position="296"/>
    </location>
    <ligand>
        <name>ATP</name>
        <dbReference type="ChEBI" id="CHEBI:30616"/>
    </ligand>
</feature>
<feature type="binding site" evidence="1">
    <location>
        <position position="327"/>
    </location>
    <ligand>
        <name>ATP</name>
        <dbReference type="ChEBI" id="CHEBI:30616"/>
    </ligand>
</feature>
<feature type="binding site" evidence="1">
    <location>
        <begin position="354"/>
        <end position="357"/>
    </location>
    <ligand>
        <name>ATP</name>
        <dbReference type="ChEBI" id="CHEBI:30616"/>
    </ligand>
</feature>
<proteinExistence type="inferred from homology"/>
<name>PGK_STRP4</name>
<organism>
    <name type="scientific">Streptococcus pneumoniae serotype 19F (strain G54)</name>
    <dbReference type="NCBI Taxonomy" id="512566"/>
    <lineage>
        <taxon>Bacteria</taxon>
        <taxon>Bacillati</taxon>
        <taxon>Bacillota</taxon>
        <taxon>Bacilli</taxon>
        <taxon>Lactobacillales</taxon>
        <taxon>Streptococcaceae</taxon>
        <taxon>Streptococcus</taxon>
    </lineage>
</organism>